<dbReference type="EMBL" id="DQ119058">
    <property type="protein sequence ID" value="AAZ94684.1"/>
    <property type="molecule type" value="Genomic_DNA"/>
</dbReference>
<dbReference type="EMBL" id="AJ970307">
    <property type="protein sequence ID" value="CAJ00793.1"/>
    <property type="molecule type" value="Genomic_DNA"/>
</dbReference>
<dbReference type="EMBL" id="DQ865975">
    <property type="protein sequence ID" value="ABI97450.1"/>
    <property type="molecule type" value="Genomic_DNA"/>
</dbReference>
<dbReference type="EMBL" id="DQ865976">
    <property type="protein sequence ID" value="ABI98779.1"/>
    <property type="molecule type" value="Genomic_DNA"/>
</dbReference>
<dbReference type="RefSeq" id="YP_247634.1">
    <property type="nucleotide sequence ID" value="NC_007144.1"/>
</dbReference>
<dbReference type="SMR" id="Q4VZK1"/>
<dbReference type="GeneID" id="3429300"/>
<dbReference type="KEGG" id="csv:3429300"/>
<dbReference type="GO" id="GO:0009507">
    <property type="term" value="C:chloroplast"/>
    <property type="evidence" value="ECO:0007669"/>
    <property type="project" value="UniProtKB-SubCell"/>
</dbReference>
<dbReference type="GO" id="GO:1990904">
    <property type="term" value="C:ribonucleoprotein complex"/>
    <property type="evidence" value="ECO:0007669"/>
    <property type="project" value="UniProtKB-KW"/>
</dbReference>
<dbReference type="GO" id="GO:0005840">
    <property type="term" value="C:ribosome"/>
    <property type="evidence" value="ECO:0007669"/>
    <property type="project" value="UniProtKB-KW"/>
</dbReference>
<dbReference type="GO" id="GO:0003735">
    <property type="term" value="F:structural constituent of ribosome"/>
    <property type="evidence" value="ECO:0007669"/>
    <property type="project" value="InterPro"/>
</dbReference>
<dbReference type="GO" id="GO:0006412">
    <property type="term" value="P:translation"/>
    <property type="evidence" value="ECO:0007669"/>
    <property type="project" value="UniProtKB-UniRule"/>
</dbReference>
<dbReference type="HAMAP" id="MF_00251">
    <property type="entry name" value="Ribosomal_bL36"/>
    <property type="match status" value="1"/>
</dbReference>
<dbReference type="InterPro" id="IPR000473">
    <property type="entry name" value="Ribosomal_bL36"/>
</dbReference>
<dbReference type="InterPro" id="IPR035977">
    <property type="entry name" value="Ribosomal_bL36_sp"/>
</dbReference>
<dbReference type="NCBIfam" id="TIGR01022">
    <property type="entry name" value="rpmJ_bact"/>
    <property type="match status" value="1"/>
</dbReference>
<dbReference type="PANTHER" id="PTHR42888">
    <property type="entry name" value="50S RIBOSOMAL PROTEIN L36, CHLOROPLASTIC"/>
    <property type="match status" value="1"/>
</dbReference>
<dbReference type="PANTHER" id="PTHR42888:SF1">
    <property type="entry name" value="LARGE RIBOSOMAL SUBUNIT PROTEIN BL36C"/>
    <property type="match status" value="1"/>
</dbReference>
<dbReference type="Pfam" id="PF00444">
    <property type="entry name" value="Ribosomal_L36"/>
    <property type="match status" value="1"/>
</dbReference>
<dbReference type="SUPFAM" id="SSF57840">
    <property type="entry name" value="Ribosomal protein L36"/>
    <property type="match status" value="1"/>
</dbReference>
<dbReference type="PROSITE" id="PS00828">
    <property type="entry name" value="RIBOSOMAL_L36"/>
    <property type="match status" value="1"/>
</dbReference>
<accession>Q4VZK1</accession>
<accession>A5J1W8</accession>
<keyword id="KW-0150">Chloroplast</keyword>
<keyword id="KW-0934">Plastid</keyword>
<keyword id="KW-0687">Ribonucleoprotein</keyword>
<keyword id="KW-0689">Ribosomal protein</keyword>
<reference key="1">
    <citation type="journal article" date="2006" name="Plant Cell Rep.">
        <title>Complete sequence and organization of the cucumber (Cucumis sativus L. cv. Baekmibaekdadagi) chloroplast genome.</title>
        <authorList>
            <person name="Kim J.-S."/>
            <person name="Jung J.D."/>
            <person name="Lee J.-A."/>
            <person name="Park H.-W."/>
            <person name="Oh K.-H."/>
            <person name="Jeong W.J."/>
            <person name="Choi D.-W."/>
            <person name="Liu J.R."/>
            <person name="Cho K.Y."/>
        </authorList>
    </citation>
    <scope>NUCLEOTIDE SEQUENCE [LARGE SCALE GENOMIC DNA]</scope>
    <source>
        <strain>cv. Baekmibaekdadagi</strain>
    </source>
</reference>
<reference key="2">
    <citation type="journal article" date="2007" name="Cell. Mol. Biol. Lett.">
        <title>The complete structure of the cucumber (Cucumis sativus L.) chloroplast genome: its composition and comparative analysis.</title>
        <authorList>
            <person name="Plader W.W."/>
            <person name="Yukawa Y."/>
            <person name="Sugiura M."/>
            <person name="Malepszy S."/>
        </authorList>
    </citation>
    <scope>NUCLEOTIDE SEQUENCE [LARGE SCALE GENOMIC DNA]</scope>
    <source>
        <strain>cv. Borszczagowski</strain>
    </source>
</reference>
<reference key="3">
    <citation type="journal article" date="2007" name="Genome">
        <title>Sequencing cucumber (Cucumis sativus L.) chloroplast genomes identifies differences between chilling-tolerant and -susceptible cucumber lines.</title>
        <authorList>
            <person name="Chung S.-M."/>
            <person name="Gordon V.S."/>
            <person name="Staub J.E."/>
        </authorList>
    </citation>
    <scope>NUCLEOTIDE SEQUENCE [LARGE SCALE GENOMIC DNA]</scope>
    <source>
        <strain>cv. Chipper</strain>
        <strain>cv. Gy14</strain>
    </source>
</reference>
<comment type="subcellular location">
    <subcellularLocation>
        <location>Plastid</location>
        <location>Chloroplast</location>
    </subcellularLocation>
</comment>
<comment type="similarity">
    <text evidence="1">Belongs to the bacterial ribosomal protein bL36 family.</text>
</comment>
<evidence type="ECO:0000255" key="1">
    <source>
        <dbReference type="HAMAP-Rule" id="MF_00251"/>
    </source>
</evidence>
<evidence type="ECO:0000305" key="2"/>
<protein>
    <recommendedName>
        <fullName evidence="1">Large ribosomal subunit protein bL36c</fullName>
    </recommendedName>
    <alternativeName>
        <fullName evidence="2">50S ribosomal protein L36, chloroplastic</fullName>
    </alternativeName>
</protein>
<gene>
    <name evidence="1" type="primary">rpl36</name>
    <name type="ordered locus">CsCp076</name>
</gene>
<feature type="chain" id="PRO_0000276813" description="Large ribosomal subunit protein bL36c">
    <location>
        <begin position="1"/>
        <end position="37"/>
    </location>
</feature>
<proteinExistence type="inferred from homology"/>
<organism>
    <name type="scientific">Cucumis sativus</name>
    <name type="common">Cucumber</name>
    <dbReference type="NCBI Taxonomy" id="3659"/>
    <lineage>
        <taxon>Eukaryota</taxon>
        <taxon>Viridiplantae</taxon>
        <taxon>Streptophyta</taxon>
        <taxon>Embryophyta</taxon>
        <taxon>Tracheophyta</taxon>
        <taxon>Spermatophyta</taxon>
        <taxon>Magnoliopsida</taxon>
        <taxon>eudicotyledons</taxon>
        <taxon>Gunneridae</taxon>
        <taxon>Pentapetalae</taxon>
        <taxon>rosids</taxon>
        <taxon>fabids</taxon>
        <taxon>Cucurbitales</taxon>
        <taxon>Cucurbitaceae</taxon>
        <taxon>Benincaseae</taxon>
        <taxon>Cucumis</taxon>
    </lineage>
</organism>
<geneLocation type="chloroplast"/>
<name>RK36_CUCSA</name>
<sequence>MKIRASIRKICEKCRLIRRRRRIMVICSNPRHKQRQG</sequence>